<feature type="chain" id="PRO_1000067821" description="Large ribosomal subunit protein bL21">
    <location>
        <begin position="1"/>
        <end position="102"/>
    </location>
</feature>
<proteinExistence type="inferred from homology"/>
<sequence length="102" mass="11609">MYAIIKHSGKQYKVSVGDELKLDHFEAESKASIEVSEVLAINDKELKVGAPFVAGAKVVLEVINHGKDKKVVIYKKRRRKDSKLKRGFRRQFTRVVVKDIKA</sequence>
<organism>
    <name type="scientific">Campylobacter jejuni subsp. jejuni serotype O:23/36 (strain 81-176)</name>
    <dbReference type="NCBI Taxonomy" id="354242"/>
    <lineage>
        <taxon>Bacteria</taxon>
        <taxon>Pseudomonadati</taxon>
        <taxon>Campylobacterota</taxon>
        <taxon>Epsilonproteobacteria</taxon>
        <taxon>Campylobacterales</taxon>
        <taxon>Campylobacteraceae</taxon>
        <taxon>Campylobacter</taxon>
    </lineage>
</organism>
<reference key="1">
    <citation type="submission" date="2006-12" db="EMBL/GenBank/DDBJ databases">
        <authorList>
            <person name="Fouts D.E."/>
            <person name="Nelson K.E."/>
            <person name="Sebastian Y."/>
        </authorList>
    </citation>
    <scope>NUCLEOTIDE SEQUENCE [LARGE SCALE GENOMIC DNA]</scope>
    <source>
        <strain>81-176</strain>
    </source>
</reference>
<accession>A1VXH7</accession>
<comment type="function">
    <text evidence="1">This protein binds to 23S rRNA in the presence of protein L20.</text>
</comment>
<comment type="subunit">
    <text evidence="1">Part of the 50S ribosomal subunit. Contacts protein L20.</text>
</comment>
<comment type="similarity">
    <text evidence="1">Belongs to the bacterial ribosomal protein bL21 family.</text>
</comment>
<gene>
    <name evidence="1" type="primary">rplU</name>
    <name type="ordered locus">CJJ81176_0129</name>
</gene>
<protein>
    <recommendedName>
        <fullName evidence="1">Large ribosomal subunit protein bL21</fullName>
    </recommendedName>
    <alternativeName>
        <fullName evidence="2">50S ribosomal protein L21</fullName>
    </alternativeName>
</protein>
<evidence type="ECO:0000255" key="1">
    <source>
        <dbReference type="HAMAP-Rule" id="MF_01363"/>
    </source>
</evidence>
<evidence type="ECO:0000305" key="2"/>
<keyword id="KW-0687">Ribonucleoprotein</keyword>
<keyword id="KW-0689">Ribosomal protein</keyword>
<keyword id="KW-0694">RNA-binding</keyword>
<keyword id="KW-0699">rRNA-binding</keyword>
<name>RL21_CAMJJ</name>
<dbReference type="EMBL" id="CP000538">
    <property type="protein sequence ID" value="EAQ71924.1"/>
    <property type="molecule type" value="Genomic_DNA"/>
</dbReference>
<dbReference type="RefSeq" id="WP_002778820.1">
    <property type="nucleotide sequence ID" value="NC_008787.1"/>
</dbReference>
<dbReference type="SMR" id="A1VXH7"/>
<dbReference type="KEGG" id="cjj:CJJ81176_0129"/>
<dbReference type="eggNOG" id="COG0261">
    <property type="taxonomic scope" value="Bacteria"/>
</dbReference>
<dbReference type="HOGENOM" id="CLU_061463_3_1_7"/>
<dbReference type="Proteomes" id="UP000000646">
    <property type="component" value="Chromosome"/>
</dbReference>
<dbReference type="GO" id="GO:0005737">
    <property type="term" value="C:cytoplasm"/>
    <property type="evidence" value="ECO:0007669"/>
    <property type="project" value="UniProtKB-ARBA"/>
</dbReference>
<dbReference type="GO" id="GO:1990904">
    <property type="term" value="C:ribonucleoprotein complex"/>
    <property type="evidence" value="ECO:0007669"/>
    <property type="project" value="UniProtKB-KW"/>
</dbReference>
<dbReference type="GO" id="GO:0005840">
    <property type="term" value="C:ribosome"/>
    <property type="evidence" value="ECO:0007669"/>
    <property type="project" value="UniProtKB-KW"/>
</dbReference>
<dbReference type="GO" id="GO:0019843">
    <property type="term" value="F:rRNA binding"/>
    <property type="evidence" value="ECO:0007669"/>
    <property type="project" value="UniProtKB-UniRule"/>
</dbReference>
<dbReference type="GO" id="GO:0003735">
    <property type="term" value="F:structural constituent of ribosome"/>
    <property type="evidence" value="ECO:0007669"/>
    <property type="project" value="InterPro"/>
</dbReference>
<dbReference type="GO" id="GO:0006412">
    <property type="term" value="P:translation"/>
    <property type="evidence" value="ECO:0007669"/>
    <property type="project" value="UniProtKB-UniRule"/>
</dbReference>
<dbReference type="HAMAP" id="MF_01363">
    <property type="entry name" value="Ribosomal_bL21"/>
    <property type="match status" value="1"/>
</dbReference>
<dbReference type="InterPro" id="IPR028909">
    <property type="entry name" value="bL21-like"/>
</dbReference>
<dbReference type="InterPro" id="IPR036164">
    <property type="entry name" value="bL21-like_sf"/>
</dbReference>
<dbReference type="InterPro" id="IPR001787">
    <property type="entry name" value="Ribosomal_bL21"/>
</dbReference>
<dbReference type="InterPro" id="IPR018258">
    <property type="entry name" value="Ribosomal_bL21_CS"/>
</dbReference>
<dbReference type="NCBIfam" id="TIGR00061">
    <property type="entry name" value="L21"/>
    <property type="match status" value="1"/>
</dbReference>
<dbReference type="PANTHER" id="PTHR21349">
    <property type="entry name" value="50S RIBOSOMAL PROTEIN L21"/>
    <property type="match status" value="1"/>
</dbReference>
<dbReference type="PANTHER" id="PTHR21349:SF0">
    <property type="entry name" value="LARGE RIBOSOMAL SUBUNIT PROTEIN BL21M"/>
    <property type="match status" value="1"/>
</dbReference>
<dbReference type="Pfam" id="PF00829">
    <property type="entry name" value="Ribosomal_L21p"/>
    <property type="match status" value="1"/>
</dbReference>
<dbReference type="SUPFAM" id="SSF141091">
    <property type="entry name" value="L21p-like"/>
    <property type="match status" value="1"/>
</dbReference>
<dbReference type="PROSITE" id="PS01169">
    <property type="entry name" value="RIBOSOMAL_L21"/>
    <property type="match status" value="1"/>
</dbReference>